<comment type="function">
    <text evidence="1">Catalyzes the formation of pyridoxal 5'-phosphate from ribose 5-phosphate (RBP), glyceraldehyde 3-phosphate (G3P) and ammonia. The ammonia is provided by the PdxT subunit. Can also use ribulose 5-phosphate and dihydroxyacetone phosphate as substrates, resulting from enzyme-catalyzed isomerization of RBP and G3P, respectively.</text>
</comment>
<comment type="catalytic activity">
    <reaction evidence="1">
        <text>aldehydo-D-ribose 5-phosphate + D-glyceraldehyde 3-phosphate + L-glutamine = pyridoxal 5'-phosphate + L-glutamate + phosphate + 3 H2O + H(+)</text>
        <dbReference type="Rhea" id="RHEA:31507"/>
        <dbReference type="ChEBI" id="CHEBI:15377"/>
        <dbReference type="ChEBI" id="CHEBI:15378"/>
        <dbReference type="ChEBI" id="CHEBI:29985"/>
        <dbReference type="ChEBI" id="CHEBI:43474"/>
        <dbReference type="ChEBI" id="CHEBI:58273"/>
        <dbReference type="ChEBI" id="CHEBI:58359"/>
        <dbReference type="ChEBI" id="CHEBI:59776"/>
        <dbReference type="ChEBI" id="CHEBI:597326"/>
        <dbReference type="EC" id="4.3.3.6"/>
    </reaction>
</comment>
<comment type="pathway">
    <text evidence="1">Cofactor biosynthesis; pyridoxal 5'-phosphate biosynthesis.</text>
</comment>
<comment type="subunit">
    <text evidence="1">In the presence of PdxT, forms a dodecamer of heterodimers.</text>
</comment>
<comment type="similarity">
    <text evidence="1">Belongs to the PdxS/SNZ family.</text>
</comment>
<organism>
    <name type="scientific">Pyrobaculum calidifontis (strain DSM 21063 / JCM 11548 / VA1)</name>
    <dbReference type="NCBI Taxonomy" id="410359"/>
    <lineage>
        <taxon>Archaea</taxon>
        <taxon>Thermoproteota</taxon>
        <taxon>Thermoprotei</taxon>
        <taxon>Thermoproteales</taxon>
        <taxon>Thermoproteaceae</taxon>
        <taxon>Pyrobaculum</taxon>
    </lineage>
</organism>
<keyword id="KW-0456">Lyase</keyword>
<keyword id="KW-0663">Pyridoxal phosphate</keyword>
<keyword id="KW-0704">Schiff base</keyword>
<reference key="1">
    <citation type="submission" date="2007-02" db="EMBL/GenBank/DDBJ databases">
        <title>Complete sequence of Pyrobaculum calidifontis JCM 11548.</title>
        <authorList>
            <consortium name="US DOE Joint Genome Institute"/>
            <person name="Copeland A."/>
            <person name="Lucas S."/>
            <person name="Lapidus A."/>
            <person name="Barry K."/>
            <person name="Glavina del Rio T."/>
            <person name="Dalin E."/>
            <person name="Tice H."/>
            <person name="Pitluck S."/>
            <person name="Chain P."/>
            <person name="Malfatti S."/>
            <person name="Shin M."/>
            <person name="Vergez L."/>
            <person name="Schmutz J."/>
            <person name="Larimer F."/>
            <person name="Land M."/>
            <person name="Hauser L."/>
            <person name="Kyrpides N."/>
            <person name="Mikhailova N."/>
            <person name="Cozen A.E."/>
            <person name="Fitz-Gibbon S.T."/>
            <person name="House C.H."/>
            <person name="Saltikov C."/>
            <person name="Lowe T.M."/>
            <person name="Richardson P."/>
        </authorList>
    </citation>
    <scope>NUCLEOTIDE SEQUENCE [LARGE SCALE GENOMIC DNA]</scope>
    <source>
        <strain>DSM 21063 / JCM 11548 / VA1</strain>
    </source>
</reference>
<gene>
    <name evidence="1" type="primary">pdxS</name>
    <name type="ordered locus">Pcal_0210</name>
</gene>
<accession>A3MSN0</accession>
<proteinExistence type="inferred from homology"/>
<feature type="chain" id="PRO_1000188238" description="Pyridoxal 5'-phosphate synthase subunit PdxS">
    <location>
        <begin position="1"/>
        <end position="336"/>
    </location>
</feature>
<feature type="active site" description="Schiff-base intermediate with D-ribose 5-phosphate" evidence="1">
    <location>
        <position position="119"/>
    </location>
</feature>
<feature type="binding site" evidence="1">
    <location>
        <position position="62"/>
    </location>
    <ligand>
        <name>D-ribose 5-phosphate</name>
        <dbReference type="ChEBI" id="CHEBI:78346"/>
    </ligand>
</feature>
<feature type="binding site" evidence="1">
    <location>
        <position position="191"/>
    </location>
    <ligand>
        <name>D-ribose 5-phosphate</name>
        <dbReference type="ChEBI" id="CHEBI:78346"/>
    </ligand>
</feature>
<feature type="binding site" evidence="1">
    <location>
        <position position="203"/>
    </location>
    <ligand>
        <name>D-glyceraldehyde 3-phosphate</name>
        <dbReference type="ChEBI" id="CHEBI:59776"/>
    </ligand>
</feature>
<feature type="binding site" evidence="1">
    <location>
        <position position="254"/>
    </location>
    <ligand>
        <name>D-ribose 5-phosphate</name>
        <dbReference type="ChEBI" id="CHEBI:78346"/>
    </ligand>
</feature>
<feature type="binding site" evidence="1">
    <location>
        <begin position="275"/>
        <end position="276"/>
    </location>
    <ligand>
        <name>D-ribose 5-phosphate</name>
        <dbReference type="ChEBI" id="CHEBI:78346"/>
    </ligand>
</feature>
<name>PDXS_PYRCJ</name>
<protein>
    <recommendedName>
        <fullName evidence="1">Pyridoxal 5'-phosphate synthase subunit PdxS</fullName>
        <shortName evidence="1">PLP synthase subunit PdxS</shortName>
        <ecNumber evidence="1">4.3.3.6</ecNumber>
    </recommendedName>
    <alternativeName>
        <fullName evidence="1">Pdx1</fullName>
    </alternativeName>
</protein>
<evidence type="ECO:0000255" key="1">
    <source>
        <dbReference type="HAMAP-Rule" id="MF_01824"/>
    </source>
</evidence>
<sequence length="336" mass="36931">MSIVPAVVELEKIRDFFYRLAEARDRLREAGFRHPAEVPLAVGTPLVKLGFIAMLRRGVIMDVTNVEQAQVAEEAGAVGVMVLDKLPYDVRKAGGVARMADLKIIEEVMDAITIPVSAKVRIGHFYEAVLLEQIGVDLIDESEVLTPVDEQHHINKWLFKTPFVNGARELCEALRRISEGASMIRSKGEAGTGNVAEAVKHFKAIYGAVRDLTAHRDDEEYLRDYARRCQVPLEVVKLTADMGRVPVITFAAGGIATPADAAFMMWLGADGVFVGSGIFKSQDPERRAEAIVLATAYWDDPEAVAEAQKMVSEKASMMGIDIRALKPEELLQTRGV</sequence>
<dbReference type="EC" id="4.3.3.6" evidence="1"/>
<dbReference type="EMBL" id="CP000561">
    <property type="protein sequence ID" value="ABO07647.1"/>
    <property type="molecule type" value="Genomic_DNA"/>
</dbReference>
<dbReference type="RefSeq" id="WP_011848904.1">
    <property type="nucleotide sequence ID" value="NC_009073.1"/>
</dbReference>
<dbReference type="SMR" id="A3MSN0"/>
<dbReference type="STRING" id="410359.Pcal_0210"/>
<dbReference type="GeneID" id="4909047"/>
<dbReference type="KEGG" id="pcl:Pcal_0210"/>
<dbReference type="eggNOG" id="arCOG04075">
    <property type="taxonomic scope" value="Archaea"/>
</dbReference>
<dbReference type="HOGENOM" id="CLU_055352_1_0_2"/>
<dbReference type="OrthoDB" id="6840at2157"/>
<dbReference type="UniPathway" id="UPA00245"/>
<dbReference type="Proteomes" id="UP000001431">
    <property type="component" value="Chromosome"/>
</dbReference>
<dbReference type="GO" id="GO:0036381">
    <property type="term" value="F:pyridoxal 5'-phosphate synthase (glutamine hydrolysing) activity"/>
    <property type="evidence" value="ECO:0007669"/>
    <property type="project" value="UniProtKB-UniRule"/>
</dbReference>
<dbReference type="GO" id="GO:0006520">
    <property type="term" value="P:amino acid metabolic process"/>
    <property type="evidence" value="ECO:0007669"/>
    <property type="project" value="TreeGrafter"/>
</dbReference>
<dbReference type="GO" id="GO:0042823">
    <property type="term" value="P:pyridoxal phosphate biosynthetic process"/>
    <property type="evidence" value="ECO:0007669"/>
    <property type="project" value="UniProtKB-UniRule"/>
</dbReference>
<dbReference type="GO" id="GO:0008615">
    <property type="term" value="P:pyridoxine biosynthetic process"/>
    <property type="evidence" value="ECO:0007669"/>
    <property type="project" value="TreeGrafter"/>
</dbReference>
<dbReference type="CDD" id="cd04727">
    <property type="entry name" value="pdxS"/>
    <property type="match status" value="1"/>
</dbReference>
<dbReference type="FunFam" id="3.20.20.70:FF:000001">
    <property type="entry name" value="Pyridoxine biosynthesis protein PDX1"/>
    <property type="match status" value="1"/>
</dbReference>
<dbReference type="Gene3D" id="3.20.20.70">
    <property type="entry name" value="Aldolase class I"/>
    <property type="match status" value="1"/>
</dbReference>
<dbReference type="HAMAP" id="MF_01824">
    <property type="entry name" value="PdxS"/>
    <property type="match status" value="1"/>
</dbReference>
<dbReference type="InterPro" id="IPR013785">
    <property type="entry name" value="Aldolase_TIM"/>
</dbReference>
<dbReference type="InterPro" id="IPR001852">
    <property type="entry name" value="PdxS/SNZ"/>
</dbReference>
<dbReference type="InterPro" id="IPR033755">
    <property type="entry name" value="PdxS/SNZ_N"/>
</dbReference>
<dbReference type="InterPro" id="IPR011060">
    <property type="entry name" value="RibuloseP-bd_barrel"/>
</dbReference>
<dbReference type="NCBIfam" id="NF003215">
    <property type="entry name" value="PRK04180.1"/>
    <property type="match status" value="1"/>
</dbReference>
<dbReference type="PANTHER" id="PTHR31829">
    <property type="entry name" value="PYRIDOXAL 5'-PHOSPHATE SYNTHASE SUBUNIT SNZ1-RELATED"/>
    <property type="match status" value="1"/>
</dbReference>
<dbReference type="PANTHER" id="PTHR31829:SF0">
    <property type="entry name" value="PYRIDOXAL 5'-PHOSPHATE SYNTHASE SUBUNIT SNZ1-RELATED"/>
    <property type="match status" value="1"/>
</dbReference>
<dbReference type="Pfam" id="PF01680">
    <property type="entry name" value="SOR_SNZ"/>
    <property type="match status" value="1"/>
</dbReference>
<dbReference type="PIRSF" id="PIRSF029271">
    <property type="entry name" value="Pdx1"/>
    <property type="match status" value="1"/>
</dbReference>
<dbReference type="SUPFAM" id="SSF51366">
    <property type="entry name" value="Ribulose-phoshate binding barrel"/>
    <property type="match status" value="1"/>
</dbReference>
<dbReference type="PROSITE" id="PS51129">
    <property type="entry name" value="PDXS_SNZ_2"/>
    <property type="match status" value="1"/>
</dbReference>